<keyword id="KW-0028">Amino-acid biosynthesis</keyword>
<keyword id="KW-0057">Aromatic amino acid biosynthesis</keyword>
<keyword id="KW-0963">Cytoplasm</keyword>
<keyword id="KW-1185">Reference proteome</keyword>
<keyword id="KW-0808">Transferase</keyword>
<protein>
    <recommendedName>
        <fullName evidence="1">3-phosphoshikimate 1-carboxyvinyltransferase</fullName>
        <ecNumber evidence="1">2.5.1.19</ecNumber>
    </recommendedName>
    <alternativeName>
        <fullName evidence="1">5-enolpyruvylshikimate-3-phosphate synthase</fullName>
        <shortName evidence="1">EPSP synthase</shortName>
        <shortName evidence="1">EPSPS</shortName>
    </alternativeName>
</protein>
<dbReference type="EC" id="2.5.1.19" evidence="1"/>
<dbReference type="EMBL" id="CP001032">
    <property type="protein sequence ID" value="ACB75396.1"/>
    <property type="molecule type" value="Genomic_DNA"/>
</dbReference>
<dbReference type="RefSeq" id="WP_012374933.1">
    <property type="nucleotide sequence ID" value="NC_010571.1"/>
</dbReference>
<dbReference type="SMR" id="B1ZMW8"/>
<dbReference type="STRING" id="452637.Oter_2113"/>
<dbReference type="KEGG" id="ote:Oter_2113"/>
<dbReference type="eggNOG" id="COG0128">
    <property type="taxonomic scope" value="Bacteria"/>
</dbReference>
<dbReference type="HOGENOM" id="CLU_024321_0_0_0"/>
<dbReference type="OrthoDB" id="9809920at2"/>
<dbReference type="UniPathway" id="UPA00053">
    <property type="reaction ID" value="UER00089"/>
</dbReference>
<dbReference type="Proteomes" id="UP000007013">
    <property type="component" value="Chromosome"/>
</dbReference>
<dbReference type="GO" id="GO:0005737">
    <property type="term" value="C:cytoplasm"/>
    <property type="evidence" value="ECO:0007669"/>
    <property type="project" value="UniProtKB-SubCell"/>
</dbReference>
<dbReference type="GO" id="GO:0003866">
    <property type="term" value="F:3-phosphoshikimate 1-carboxyvinyltransferase activity"/>
    <property type="evidence" value="ECO:0007669"/>
    <property type="project" value="UniProtKB-UniRule"/>
</dbReference>
<dbReference type="GO" id="GO:0008652">
    <property type="term" value="P:amino acid biosynthetic process"/>
    <property type="evidence" value="ECO:0007669"/>
    <property type="project" value="UniProtKB-KW"/>
</dbReference>
<dbReference type="GO" id="GO:0009073">
    <property type="term" value="P:aromatic amino acid family biosynthetic process"/>
    <property type="evidence" value="ECO:0007669"/>
    <property type="project" value="UniProtKB-KW"/>
</dbReference>
<dbReference type="GO" id="GO:0009423">
    <property type="term" value="P:chorismate biosynthetic process"/>
    <property type="evidence" value="ECO:0007669"/>
    <property type="project" value="UniProtKB-UniRule"/>
</dbReference>
<dbReference type="CDD" id="cd01556">
    <property type="entry name" value="EPSP_synthase"/>
    <property type="match status" value="1"/>
</dbReference>
<dbReference type="Gene3D" id="3.65.10.10">
    <property type="entry name" value="Enolpyruvate transferase domain"/>
    <property type="match status" value="2"/>
</dbReference>
<dbReference type="HAMAP" id="MF_00210">
    <property type="entry name" value="EPSP_synth"/>
    <property type="match status" value="1"/>
</dbReference>
<dbReference type="InterPro" id="IPR001986">
    <property type="entry name" value="Enolpyruvate_Tfrase_dom"/>
</dbReference>
<dbReference type="InterPro" id="IPR036968">
    <property type="entry name" value="Enolpyruvate_Tfrase_sf"/>
</dbReference>
<dbReference type="InterPro" id="IPR006264">
    <property type="entry name" value="EPSP_synthase"/>
</dbReference>
<dbReference type="InterPro" id="IPR023193">
    <property type="entry name" value="EPSP_synthase_CS"/>
</dbReference>
<dbReference type="InterPro" id="IPR013792">
    <property type="entry name" value="RNA3'P_cycl/enolpyr_Trfase_a/b"/>
</dbReference>
<dbReference type="NCBIfam" id="TIGR01356">
    <property type="entry name" value="aroA"/>
    <property type="match status" value="1"/>
</dbReference>
<dbReference type="PANTHER" id="PTHR21090">
    <property type="entry name" value="AROM/DEHYDROQUINATE SYNTHASE"/>
    <property type="match status" value="1"/>
</dbReference>
<dbReference type="PANTHER" id="PTHR21090:SF5">
    <property type="entry name" value="PENTAFUNCTIONAL AROM POLYPEPTIDE"/>
    <property type="match status" value="1"/>
</dbReference>
<dbReference type="Pfam" id="PF00275">
    <property type="entry name" value="EPSP_synthase"/>
    <property type="match status" value="1"/>
</dbReference>
<dbReference type="PIRSF" id="PIRSF000505">
    <property type="entry name" value="EPSPS"/>
    <property type="match status" value="1"/>
</dbReference>
<dbReference type="SUPFAM" id="SSF55205">
    <property type="entry name" value="EPT/RTPC-like"/>
    <property type="match status" value="1"/>
</dbReference>
<dbReference type="PROSITE" id="PS00104">
    <property type="entry name" value="EPSP_SYNTHASE_1"/>
    <property type="match status" value="1"/>
</dbReference>
<feature type="chain" id="PRO_1000189565" description="3-phosphoshikimate 1-carboxyvinyltransferase">
    <location>
        <begin position="1"/>
        <end position="431"/>
    </location>
</feature>
<feature type="active site" description="Proton acceptor" evidence="1">
    <location>
        <position position="308"/>
    </location>
</feature>
<feature type="binding site" evidence="1">
    <location>
        <position position="26"/>
    </location>
    <ligand>
        <name>3-phosphoshikimate</name>
        <dbReference type="ChEBI" id="CHEBI:145989"/>
    </ligand>
</feature>
<feature type="binding site" evidence="1">
    <location>
        <position position="26"/>
    </location>
    <ligand>
        <name>phosphoenolpyruvate</name>
        <dbReference type="ChEBI" id="CHEBI:58702"/>
    </ligand>
</feature>
<feature type="binding site" evidence="1">
    <location>
        <position position="27"/>
    </location>
    <ligand>
        <name>3-phosphoshikimate</name>
        <dbReference type="ChEBI" id="CHEBI:145989"/>
    </ligand>
</feature>
<feature type="binding site" evidence="1">
    <location>
        <position position="31"/>
    </location>
    <ligand>
        <name>3-phosphoshikimate</name>
        <dbReference type="ChEBI" id="CHEBI:145989"/>
    </ligand>
</feature>
<feature type="binding site" evidence="1">
    <location>
        <position position="100"/>
    </location>
    <ligand>
        <name>phosphoenolpyruvate</name>
        <dbReference type="ChEBI" id="CHEBI:58702"/>
    </ligand>
</feature>
<feature type="binding site" evidence="1">
    <location>
        <position position="129"/>
    </location>
    <ligand>
        <name>phosphoenolpyruvate</name>
        <dbReference type="ChEBI" id="CHEBI:58702"/>
    </ligand>
</feature>
<feature type="binding site" evidence="1">
    <location>
        <position position="175"/>
    </location>
    <ligand>
        <name>3-phosphoshikimate</name>
        <dbReference type="ChEBI" id="CHEBI:145989"/>
    </ligand>
</feature>
<feature type="binding site" evidence="1">
    <location>
        <position position="176"/>
    </location>
    <ligand>
        <name>3-phosphoshikimate</name>
        <dbReference type="ChEBI" id="CHEBI:145989"/>
    </ligand>
</feature>
<feature type="binding site" evidence="1">
    <location>
        <position position="177"/>
    </location>
    <ligand>
        <name>3-phosphoshikimate</name>
        <dbReference type="ChEBI" id="CHEBI:145989"/>
    </ligand>
</feature>
<feature type="binding site" evidence="1">
    <location>
        <position position="177"/>
    </location>
    <ligand>
        <name>phosphoenolpyruvate</name>
        <dbReference type="ChEBI" id="CHEBI:58702"/>
    </ligand>
</feature>
<feature type="binding site" evidence="1">
    <location>
        <position position="308"/>
    </location>
    <ligand>
        <name>3-phosphoshikimate</name>
        <dbReference type="ChEBI" id="CHEBI:145989"/>
    </ligand>
</feature>
<feature type="binding site" evidence="1">
    <location>
        <position position="335"/>
    </location>
    <ligand>
        <name>3-phosphoshikimate</name>
        <dbReference type="ChEBI" id="CHEBI:145989"/>
    </ligand>
</feature>
<feature type="binding site" evidence="1">
    <location>
        <position position="339"/>
    </location>
    <ligand>
        <name>phosphoenolpyruvate</name>
        <dbReference type="ChEBI" id="CHEBI:58702"/>
    </ligand>
</feature>
<feature type="binding site" evidence="1">
    <location>
        <position position="381"/>
    </location>
    <ligand>
        <name>phosphoenolpyruvate</name>
        <dbReference type="ChEBI" id="CHEBI:58702"/>
    </ligand>
</feature>
<feature type="binding site" evidence="1">
    <location>
        <position position="412"/>
    </location>
    <ligand>
        <name>phosphoenolpyruvate</name>
        <dbReference type="ChEBI" id="CHEBI:58702"/>
    </ligand>
</feature>
<proteinExistence type="inferred from homology"/>
<comment type="function">
    <text evidence="1">Catalyzes the transfer of the enolpyruvyl moiety of phosphoenolpyruvate (PEP) to the 5-hydroxyl of shikimate-3-phosphate (S3P) to produce enolpyruvyl shikimate-3-phosphate and inorganic phosphate.</text>
</comment>
<comment type="catalytic activity">
    <reaction evidence="1">
        <text>3-phosphoshikimate + phosphoenolpyruvate = 5-O-(1-carboxyvinyl)-3-phosphoshikimate + phosphate</text>
        <dbReference type="Rhea" id="RHEA:21256"/>
        <dbReference type="ChEBI" id="CHEBI:43474"/>
        <dbReference type="ChEBI" id="CHEBI:57701"/>
        <dbReference type="ChEBI" id="CHEBI:58702"/>
        <dbReference type="ChEBI" id="CHEBI:145989"/>
        <dbReference type="EC" id="2.5.1.19"/>
    </reaction>
    <physiologicalReaction direction="left-to-right" evidence="1">
        <dbReference type="Rhea" id="RHEA:21257"/>
    </physiologicalReaction>
</comment>
<comment type="pathway">
    <text evidence="1">Metabolic intermediate biosynthesis; chorismate biosynthesis; chorismate from D-erythrose 4-phosphate and phosphoenolpyruvate: step 6/7.</text>
</comment>
<comment type="subunit">
    <text evidence="1">Monomer.</text>
</comment>
<comment type="subcellular location">
    <subcellularLocation>
        <location evidence="1">Cytoplasm</location>
    </subcellularLocation>
</comment>
<comment type="similarity">
    <text evidence="1">Belongs to the EPSP synthase family.</text>
</comment>
<name>AROA_OPITP</name>
<reference key="1">
    <citation type="journal article" date="2011" name="J. Bacteriol.">
        <title>Genome sequence of the verrucomicrobium Opitutus terrae PB90-1, an abundant inhabitant of rice paddy soil ecosystems.</title>
        <authorList>
            <person name="van Passel M.W."/>
            <person name="Kant R."/>
            <person name="Palva A."/>
            <person name="Copeland A."/>
            <person name="Lucas S."/>
            <person name="Lapidus A."/>
            <person name="Glavina del Rio T."/>
            <person name="Pitluck S."/>
            <person name="Goltsman E."/>
            <person name="Clum A."/>
            <person name="Sun H."/>
            <person name="Schmutz J."/>
            <person name="Larimer F.W."/>
            <person name="Land M.L."/>
            <person name="Hauser L."/>
            <person name="Kyrpides N."/>
            <person name="Mikhailova N."/>
            <person name="Richardson P.P."/>
            <person name="Janssen P.H."/>
            <person name="de Vos W.M."/>
            <person name="Smidt H."/>
        </authorList>
    </citation>
    <scope>NUCLEOTIDE SEQUENCE [LARGE SCALE GENOMIC DNA]</scope>
    <source>
        <strain>DSM 11246 / JCM 15787 / PB90-1</strain>
    </source>
</reference>
<organism>
    <name type="scientific">Opitutus terrae (strain DSM 11246 / JCM 15787 / PB90-1)</name>
    <dbReference type="NCBI Taxonomy" id="452637"/>
    <lineage>
        <taxon>Bacteria</taxon>
        <taxon>Pseudomonadati</taxon>
        <taxon>Verrucomicrobiota</taxon>
        <taxon>Opitutia</taxon>
        <taxon>Opitutales</taxon>
        <taxon>Opitutaceae</taxon>
        <taxon>Opitutus</taxon>
    </lineage>
</organism>
<evidence type="ECO:0000255" key="1">
    <source>
        <dbReference type="HAMAP-Rule" id="MF_00210"/>
    </source>
</evidence>
<gene>
    <name evidence="1" type="primary">aroA</name>
    <name type="ordered locus">Oter_2113</name>
</gene>
<sequence length="431" mass="46602">MPLPDLLPIAPFTRPVRGEVTLPGSKSLTNRALLLAALCDHPVVLTGALFSEDTQLMVAALRRLGLTVFANEPARTLAVSDQASAFQAKAPVDLFVGLAGTAARFLTALCAAAPRGVYRIDGVSQMRKRPMRGLIDALRALGAEVRCTEREGFFPLEIHARGLRGGPVEIDASESSQLLSALLMVAPLARAATQITLTSDVRWTFVEMTFRLMAEFGVRIDHAGSSTTFEMKAGRYSAPSRYAIEPDATAASYFQALPLVVGGTLALPGLRPPGDGLQGDSAFVDVLARVRARAAGQLLEENFHEISDTFLTLAAITPLLAGPTRITGIAHTRQQETDRVAGMARELMQLGQRVVETRGELEIHPQPLRLGETIETYGDHRFAMSFAILGCRDVRGDGRPWLSIRDPACCAKTFPNFFELLATLRQKSLAD</sequence>
<accession>B1ZMW8</accession>